<comment type="function">
    <text evidence="1">Produces ATP from ADP in the presence of a proton gradient across the membrane. The alpha chain is a regulatory subunit.</text>
</comment>
<comment type="catalytic activity">
    <reaction evidence="1">
        <text>ATP + H2O + 4 H(+)(in) = ADP + phosphate + 5 H(+)(out)</text>
        <dbReference type="Rhea" id="RHEA:57720"/>
        <dbReference type="ChEBI" id="CHEBI:15377"/>
        <dbReference type="ChEBI" id="CHEBI:15378"/>
        <dbReference type="ChEBI" id="CHEBI:30616"/>
        <dbReference type="ChEBI" id="CHEBI:43474"/>
        <dbReference type="ChEBI" id="CHEBI:456216"/>
        <dbReference type="EC" id="7.1.2.2"/>
    </reaction>
</comment>
<comment type="subunit">
    <text evidence="1">F-type ATPases have 2 components, CF(1) - the catalytic core - and CF(0) - the membrane proton channel. CF(1) has five subunits: alpha(3), beta(3), gamma(1), delta(1), epsilon(1). CF(0) has three main subunits: a(1), b(2) and c(9-12). The alpha and beta chains form an alternating ring which encloses part of the gamma chain. CF(1) is attached to CF(0) by a central stalk formed by the gamma and epsilon chains, while a peripheral stalk is formed by the delta and b chains.</text>
</comment>
<comment type="subcellular location">
    <subcellularLocation>
        <location evidence="1">Cell inner membrane</location>
        <topology evidence="1">Peripheral membrane protein</topology>
    </subcellularLocation>
</comment>
<comment type="similarity">
    <text evidence="1">Belongs to the ATPase alpha/beta chains family.</text>
</comment>
<protein>
    <recommendedName>
        <fullName evidence="1">ATP synthase subunit alpha</fullName>
        <ecNumber evidence="1">7.1.2.2</ecNumber>
    </recommendedName>
    <alternativeName>
        <fullName evidence="1">ATP synthase F1 sector subunit alpha</fullName>
    </alternativeName>
    <alternativeName>
        <fullName evidence="1">F-ATPase subunit alpha</fullName>
    </alternativeName>
</protein>
<evidence type="ECO:0000255" key="1">
    <source>
        <dbReference type="HAMAP-Rule" id="MF_01346"/>
    </source>
</evidence>
<accession>B0TWS5</accession>
<sequence length="513" mass="55504">MQLSPSEISGLIKKRIEKFDNSVELKSEGSIVSVADGIVTIYGLDDVTAGEMIKLPGDVYGLALNLNTDSVGAVVLGDYEHIKEGDKAYCTGRILEVPVGEALLGRVVDALGNPIDGRGEIETAHSSPIEKIAPGVIWRKSVDQALQTGIKSIDSMVPIGRGQRELIIGDRQIGKTAIAIDAIINQKGTGVKCIYVAIGQKASSIANIVRQLEEHGAMEHTIIVAATASDSAALQYIAPYAGCSMGEYFRDRGEDALIVYDDLTKQAWAYRQISLLLRRPPGREAYPGDVFYLHSRLLERAARVNEEYVERFTNGEVKGKTGSLTALPIIETQAGDISAFVPTNVISITDGQIFLETDLFNSGLRPAINPGNSVSRVGGAAQTKIIKKLGGGIRLALAQFRELEAFSQFASDLDEATRSQLNRGQRVTELLKQKQFSTLSIALMALSLYAADNGYLDSLEVSEVIPFESALHALAENKYAEVVAEINETGKYDAEIAEKLKTIVEDCKANQAW</sequence>
<feature type="chain" id="PRO_1000086879" description="ATP synthase subunit alpha">
    <location>
        <begin position="1"/>
        <end position="513"/>
    </location>
</feature>
<feature type="binding site" evidence="1">
    <location>
        <begin position="169"/>
        <end position="176"/>
    </location>
    <ligand>
        <name>ATP</name>
        <dbReference type="ChEBI" id="CHEBI:30616"/>
    </ligand>
</feature>
<feature type="site" description="Required for activity" evidence="1">
    <location>
        <position position="373"/>
    </location>
</feature>
<keyword id="KW-0066">ATP synthesis</keyword>
<keyword id="KW-0067">ATP-binding</keyword>
<keyword id="KW-0997">Cell inner membrane</keyword>
<keyword id="KW-1003">Cell membrane</keyword>
<keyword id="KW-0139">CF(1)</keyword>
<keyword id="KW-0375">Hydrogen ion transport</keyword>
<keyword id="KW-0406">Ion transport</keyword>
<keyword id="KW-0472">Membrane</keyword>
<keyword id="KW-0547">Nucleotide-binding</keyword>
<keyword id="KW-1278">Translocase</keyword>
<keyword id="KW-0813">Transport</keyword>
<proteinExistence type="inferred from homology"/>
<organism>
    <name type="scientific">Francisella philomiragia subsp. philomiragia (strain ATCC 25017 / CCUG 19701 / FSC 153 / O#319-036)</name>
    <dbReference type="NCBI Taxonomy" id="484022"/>
    <lineage>
        <taxon>Bacteria</taxon>
        <taxon>Pseudomonadati</taxon>
        <taxon>Pseudomonadota</taxon>
        <taxon>Gammaproteobacteria</taxon>
        <taxon>Thiotrichales</taxon>
        <taxon>Francisellaceae</taxon>
        <taxon>Francisella</taxon>
    </lineage>
</organism>
<gene>
    <name evidence="1" type="primary">atpA</name>
    <name type="ordered locus">Fphi_0960</name>
</gene>
<reference key="1">
    <citation type="submission" date="2007-12" db="EMBL/GenBank/DDBJ databases">
        <title>Complete sequence of chromosome of Francisella philomiragia subsp. philomiragia ATCC 25017.</title>
        <authorList>
            <consortium name="US DOE Joint Genome Institute"/>
            <person name="Copeland A."/>
            <person name="Lucas S."/>
            <person name="Lapidus A."/>
            <person name="Barry K."/>
            <person name="Detter J.C."/>
            <person name="Glavina del Rio T."/>
            <person name="Hammon N."/>
            <person name="Israni S."/>
            <person name="Dalin E."/>
            <person name="Tice H."/>
            <person name="Pitluck S."/>
            <person name="Chain P."/>
            <person name="Malfatti S."/>
            <person name="Shin M."/>
            <person name="Vergez L."/>
            <person name="Schmutz J."/>
            <person name="Larimer F."/>
            <person name="Land M."/>
            <person name="Hauser L."/>
            <person name="Richardson P."/>
        </authorList>
    </citation>
    <scope>NUCLEOTIDE SEQUENCE [LARGE SCALE GENOMIC DNA]</scope>
    <source>
        <strain>ATCC 25017 / CCUG 19701 / FSC 153 / O#319-036</strain>
    </source>
</reference>
<dbReference type="EC" id="7.1.2.2" evidence="1"/>
<dbReference type="EMBL" id="CP000937">
    <property type="protein sequence ID" value="ABZ87183.1"/>
    <property type="molecule type" value="Genomic_DNA"/>
</dbReference>
<dbReference type="SMR" id="B0TWS5"/>
<dbReference type="KEGG" id="fph:Fphi_0960"/>
<dbReference type="eggNOG" id="COG0056">
    <property type="taxonomic scope" value="Bacteria"/>
</dbReference>
<dbReference type="HOGENOM" id="CLU_010091_2_1_6"/>
<dbReference type="GO" id="GO:0005886">
    <property type="term" value="C:plasma membrane"/>
    <property type="evidence" value="ECO:0007669"/>
    <property type="project" value="UniProtKB-SubCell"/>
</dbReference>
<dbReference type="GO" id="GO:0045259">
    <property type="term" value="C:proton-transporting ATP synthase complex"/>
    <property type="evidence" value="ECO:0007669"/>
    <property type="project" value="UniProtKB-KW"/>
</dbReference>
<dbReference type="GO" id="GO:0043531">
    <property type="term" value="F:ADP binding"/>
    <property type="evidence" value="ECO:0007669"/>
    <property type="project" value="TreeGrafter"/>
</dbReference>
<dbReference type="GO" id="GO:0005524">
    <property type="term" value="F:ATP binding"/>
    <property type="evidence" value="ECO:0007669"/>
    <property type="project" value="UniProtKB-UniRule"/>
</dbReference>
<dbReference type="GO" id="GO:0046933">
    <property type="term" value="F:proton-transporting ATP synthase activity, rotational mechanism"/>
    <property type="evidence" value="ECO:0007669"/>
    <property type="project" value="UniProtKB-UniRule"/>
</dbReference>
<dbReference type="CDD" id="cd18113">
    <property type="entry name" value="ATP-synt_F1_alpha_C"/>
    <property type="match status" value="1"/>
</dbReference>
<dbReference type="CDD" id="cd18116">
    <property type="entry name" value="ATP-synt_F1_alpha_N"/>
    <property type="match status" value="1"/>
</dbReference>
<dbReference type="CDD" id="cd01132">
    <property type="entry name" value="F1-ATPase_alpha_CD"/>
    <property type="match status" value="1"/>
</dbReference>
<dbReference type="FunFam" id="1.20.150.20:FF:000001">
    <property type="entry name" value="ATP synthase subunit alpha"/>
    <property type="match status" value="1"/>
</dbReference>
<dbReference type="FunFam" id="2.40.30.20:FF:000001">
    <property type="entry name" value="ATP synthase subunit alpha"/>
    <property type="match status" value="1"/>
</dbReference>
<dbReference type="FunFam" id="3.40.50.300:FF:000002">
    <property type="entry name" value="ATP synthase subunit alpha"/>
    <property type="match status" value="1"/>
</dbReference>
<dbReference type="Gene3D" id="2.40.30.20">
    <property type="match status" value="1"/>
</dbReference>
<dbReference type="Gene3D" id="1.20.150.20">
    <property type="entry name" value="ATP synthase alpha/beta chain, C-terminal domain"/>
    <property type="match status" value="1"/>
</dbReference>
<dbReference type="Gene3D" id="3.40.50.300">
    <property type="entry name" value="P-loop containing nucleotide triphosphate hydrolases"/>
    <property type="match status" value="1"/>
</dbReference>
<dbReference type="HAMAP" id="MF_01346">
    <property type="entry name" value="ATP_synth_alpha_bact"/>
    <property type="match status" value="1"/>
</dbReference>
<dbReference type="InterPro" id="IPR023366">
    <property type="entry name" value="ATP_synth_asu-like_sf"/>
</dbReference>
<dbReference type="InterPro" id="IPR000793">
    <property type="entry name" value="ATP_synth_asu_C"/>
</dbReference>
<dbReference type="InterPro" id="IPR038376">
    <property type="entry name" value="ATP_synth_asu_C_sf"/>
</dbReference>
<dbReference type="InterPro" id="IPR033732">
    <property type="entry name" value="ATP_synth_F1_a_nt-bd_dom"/>
</dbReference>
<dbReference type="InterPro" id="IPR005294">
    <property type="entry name" value="ATP_synth_F1_asu"/>
</dbReference>
<dbReference type="InterPro" id="IPR020003">
    <property type="entry name" value="ATPase_a/bsu_AS"/>
</dbReference>
<dbReference type="InterPro" id="IPR004100">
    <property type="entry name" value="ATPase_F1/V1/A1_a/bsu_N"/>
</dbReference>
<dbReference type="InterPro" id="IPR036121">
    <property type="entry name" value="ATPase_F1/V1/A1_a/bsu_N_sf"/>
</dbReference>
<dbReference type="InterPro" id="IPR000194">
    <property type="entry name" value="ATPase_F1/V1/A1_a/bsu_nucl-bd"/>
</dbReference>
<dbReference type="InterPro" id="IPR027417">
    <property type="entry name" value="P-loop_NTPase"/>
</dbReference>
<dbReference type="NCBIfam" id="TIGR00962">
    <property type="entry name" value="atpA"/>
    <property type="match status" value="1"/>
</dbReference>
<dbReference type="NCBIfam" id="NF009884">
    <property type="entry name" value="PRK13343.1"/>
    <property type="match status" value="1"/>
</dbReference>
<dbReference type="PANTHER" id="PTHR48082">
    <property type="entry name" value="ATP SYNTHASE SUBUNIT ALPHA, MITOCHONDRIAL"/>
    <property type="match status" value="1"/>
</dbReference>
<dbReference type="PANTHER" id="PTHR48082:SF2">
    <property type="entry name" value="ATP SYNTHASE SUBUNIT ALPHA, MITOCHONDRIAL"/>
    <property type="match status" value="1"/>
</dbReference>
<dbReference type="Pfam" id="PF00006">
    <property type="entry name" value="ATP-synt_ab"/>
    <property type="match status" value="1"/>
</dbReference>
<dbReference type="Pfam" id="PF00306">
    <property type="entry name" value="ATP-synt_ab_C"/>
    <property type="match status" value="1"/>
</dbReference>
<dbReference type="Pfam" id="PF02874">
    <property type="entry name" value="ATP-synt_ab_N"/>
    <property type="match status" value="1"/>
</dbReference>
<dbReference type="SUPFAM" id="SSF47917">
    <property type="entry name" value="C-terminal domain of alpha and beta subunits of F1 ATP synthase"/>
    <property type="match status" value="1"/>
</dbReference>
<dbReference type="SUPFAM" id="SSF50615">
    <property type="entry name" value="N-terminal domain of alpha and beta subunits of F1 ATP synthase"/>
    <property type="match status" value="1"/>
</dbReference>
<dbReference type="SUPFAM" id="SSF52540">
    <property type="entry name" value="P-loop containing nucleoside triphosphate hydrolases"/>
    <property type="match status" value="1"/>
</dbReference>
<dbReference type="PROSITE" id="PS00152">
    <property type="entry name" value="ATPASE_ALPHA_BETA"/>
    <property type="match status" value="1"/>
</dbReference>
<name>ATPA_FRAP2</name>